<gene>
    <name evidence="1" type="primary">rnz</name>
    <name type="ordered locus">CKL_2411</name>
</gene>
<accession>A5MZX7</accession>
<feature type="chain" id="PRO_1000088333" description="Ribonuclease Z">
    <location>
        <begin position="1"/>
        <end position="303"/>
    </location>
</feature>
<feature type="active site" description="Proton acceptor" evidence="1">
    <location>
        <position position="65"/>
    </location>
</feature>
<feature type="binding site" evidence="1">
    <location>
        <position position="61"/>
    </location>
    <ligand>
        <name>Zn(2+)</name>
        <dbReference type="ChEBI" id="CHEBI:29105"/>
        <label>1</label>
        <note>catalytic</note>
    </ligand>
</feature>
<feature type="binding site" evidence="1">
    <location>
        <position position="63"/>
    </location>
    <ligand>
        <name>Zn(2+)</name>
        <dbReference type="ChEBI" id="CHEBI:29105"/>
        <label>1</label>
        <note>catalytic</note>
    </ligand>
</feature>
<feature type="binding site" evidence="1">
    <location>
        <position position="65"/>
    </location>
    <ligand>
        <name>Zn(2+)</name>
        <dbReference type="ChEBI" id="CHEBI:29105"/>
        <label>2</label>
        <note>catalytic</note>
    </ligand>
</feature>
<feature type="binding site" evidence="1">
    <location>
        <position position="66"/>
    </location>
    <ligand>
        <name>Zn(2+)</name>
        <dbReference type="ChEBI" id="CHEBI:29105"/>
        <label>2</label>
        <note>catalytic</note>
    </ligand>
</feature>
<feature type="binding site" evidence="1">
    <location>
        <position position="139"/>
    </location>
    <ligand>
        <name>Zn(2+)</name>
        <dbReference type="ChEBI" id="CHEBI:29105"/>
        <label>1</label>
        <note>catalytic</note>
    </ligand>
</feature>
<feature type="binding site" evidence="1">
    <location>
        <position position="207"/>
    </location>
    <ligand>
        <name>Zn(2+)</name>
        <dbReference type="ChEBI" id="CHEBI:29105"/>
        <label>1</label>
        <note>catalytic</note>
    </ligand>
</feature>
<feature type="binding site" evidence="1">
    <location>
        <position position="207"/>
    </location>
    <ligand>
        <name>Zn(2+)</name>
        <dbReference type="ChEBI" id="CHEBI:29105"/>
        <label>2</label>
        <note>catalytic</note>
    </ligand>
</feature>
<feature type="binding site" evidence="1">
    <location>
        <position position="266"/>
    </location>
    <ligand>
        <name>Zn(2+)</name>
        <dbReference type="ChEBI" id="CHEBI:29105"/>
        <label>2</label>
        <note>catalytic</note>
    </ligand>
</feature>
<proteinExistence type="inferred from homology"/>
<keyword id="KW-0255">Endonuclease</keyword>
<keyword id="KW-0378">Hydrolase</keyword>
<keyword id="KW-0479">Metal-binding</keyword>
<keyword id="KW-0540">Nuclease</keyword>
<keyword id="KW-1185">Reference proteome</keyword>
<keyword id="KW-0819">tRNA processing</keyword>
<keyword id="KW-0862">Zinc</keyword>
<organism>
    <name type="scientific">Clostridium kluyveri (strain ATCC 8527 / DSM 555 / NBRC 12016 / NCIMB 10680 / K1)</name>
    <dbReference type="NCBI Taxonomy" id="431943"/>
    <lineage>
        <taxon>Bacteria</taxon>
        <taxon>Bacillati</taxon>
        <taxon>Bacillota</taxon>
        <taxon>Clostridia</taxon>
        <taxon>Eubacteriales</taxon>
        <taxon>Clostridiaceae</taxon>
        <taxon>Clostridium</taxon>
    </lineage>
</organism>
<dbReference type="EC" id="3.1.26.11" evidence="1"/>
<dbReference type="EMBL" id="CP000673">
    <property type="protein sequence ID" value="EDK34423.1"/>
    <property type="molecule type" value="Genomic_DNA"/>
</dbReference>
<dbReference type="RefSeq" id="WP_012102756.1">
    <property type="nucleotide sequence ID" value="NC_009706.1"/>
</dbReference>
<dbReference type="SMR" id="A5MZX7"/>
<dbReference type="STRING" id="431943.CKL_2411"/>
<dbReference type="KEGG" id="ckl:CKL_2411"/>
<dbReference type="eggNOG" id="COG1234">
    <property type="taxonomic scope" value="Bacteria"/>
</dbReference>
<dbReference type="HOGENOM" id="CLU_031317_2_1_9"/>
<dbReference type="Proteomes" id="UP000002411">
    <property type="component" value="Chromosome"/>
</dbReference>
<dbReference type="GO" id="GO:0042781">
    <property type="term" value="F:3'-tRNA processing endoribonuclease activity"/>
    <property type="evidence" value="ECO:0007669"/>
    <property type="project" value="UniProtKB-UniRule"/>
</dbReference>
<dbReference type="GO" id="GO:0008270">
    <property type="term" value="F:zinc ion binding"/>
    <property type="evidence" value="ECO:0007669"/>
    <property type="project" value="UniProtKB-UniRule"/>
</dbReference>
<dbReference type="CDD" id="cd07717">
    <property type="entry name" value="RNaseZ_ZiPD-like_MBL-fold"/>
    <property type="match status" value="1"/>
</dbReference>
<dbReference type="Gene3D" id="3.60.15.10">
    <property type="entry name" value="Ribonuclease Z/Hydroxyacylglutathione hydrolase-like"/>
    <property type="match status" value="1"/>
</dbReference>
<dbReference type="HAMAP" id="MF_01818">
    <property type="entry name" value="RNase_Z_BN"/>
    <property type="match status" value="1"/>
</dbReference>
<dbReference type="InterPro" id="IPR001279">
    <property type="entry name" value="Metallo-B-lactamas"/>
</dbReference>
<dbReference type="InterPro" id="IPR036866">
    <property type="entry name" value="RibonucZ/Hydroxyglut_hydro"/>
</dbReference>
<dbReference type="InterPro" id="IPR013471">
    <property type="entry name" value="RNase_Z/BN"/>
</dbReference>
<dbReference type="NCBIfam" id="NF000801">
    <property type="entry name" value="PRK00055.1-3"/>
    <property type="match status" value="1"/>
</dbReference>
<dbReference type="NCBIfam" id="TIGR02651">
    <property type="entry name" value="RNase_Z"/>
    <property type="match status" value="1"/>
</dbReference>
<dbReference type="PANTHER" id="PTHR46018">
    <property type="entry name" value="ZINC PHOSPHODIESTERASE ELAC PROTEIN 1"/>
    <property type="match status" value="1"/>
</dbReference>
<dbReference type="PANTHER" id="PTHR46018:SF2">
    <property type="entry name" value="ZINC PHOSPHODIESTERASE ELAC PROTEIN 1"/>
    <property type="match status" value="1"/>
</dbReference>
<dbReference type="Pfam" id="PF00753">
    <property type="entry name" value="Lactamase_B"/>
    <property type="match status" value="1"/>
</dbReference>
<dbReference type="SUPFAM" id="SSF56281">
    <property type="entry name" value="Metallo-hydrolase/oxidoreductase"/>
    <property type="match status" value="1"/>
</dbReference>
<sequence length="303" mass="34440">MLDVCLLGCGGSMPIPDRNLTAMIVSYQGRKLLIDCGEGTQVSLKILGWKIRNIDVILFTHFHADHIAGLPGLLLTIANSGRLEPITIIGPYGLIKIVMGLKVIAPVLPYSIELVELHGKEKYFQKIGYFNINILSVDHGIPCFAYSIDVQRNRKFDREKALKNKVPLIFWSKLQKGEEIKQRDKLYTPDMVLGYGRRGLKISYCTDSRPSRELVEFVKKSDVFICEGMYGDDEKKHKAISYKHMIFSEAAVIAKEAEVEELWLTHFSPSLIEPQAYIENAKNIFKNTIIGQDRYVKSINFKE</sequence>
<reference key="1">
    <citation type="journal article" date="2008" name="Proc. Natl. Acad. Sci. U.S.A.">
        <title>The genome of Clostridium kluyveri, a strict anaerobe with unique metabolic features.</title>
        <authorList>
            <person name="Seedorf H."/>
            <person name="Fricke W.F."/>
            <person name="Veith B."/>
            <person name="Brueggemann H."/>
            <person name="Liesegang H."/>
            <person name="Strittmatter A."/>
            <person name="Miethke M."/>
            <person name="Buckel W."/>
            <person name="Hinderberger J."/>
            <person name="Li F."/>
            <person name="Hagemeier C."/>
            <person name="Thauer R.K."/>
            <person name="Gottschalk G."/>
        </authorList>
    </citation>
    <scope>NUCLEOTIDE SEQUENCE [LARGE SCALE GENOMIC DNA]</scope>
    <source>
        <strain>ATCC 8527 / DSM 555 / NBRC 12016 / NCIMB 10680 / K1</strain>
    </source>
</reference>
<name>RNZ_CLOK5</name>
<comment type="function">
    <text evidence="1">Zinc phosphodiesterase, which displays some tRNA 3'-processing endonuclease activity. Probably involved in tRNA maturation, by removing a 3'-trailer from precursor tRNA.</text>
</comment>
<comment type="catalytic activity">
    <reaction evidence="1">
        <text>Endonucleolytic cleavage of RNA, removing extra 3' nucleotides from tRNA precursor, generating 3' termini of tRNAs. A 3'-hydroxy group is left at the tRNA terminus and a 5'-phosphoryl group is left at the trailer molecule.</text>
        <dbReference type="EC" id="3.1.26.11"/>
    </reaction>
</comment>
<comment type="cofactor">
    <cofactor evidence="1">
        <name>Zn(2+)</name>
        <dbReference type="ChEBI" id="CHEBI:29105"/>
    </cofactor>
    <text evidence="1">Binds 2 Zn(2+) ions.</text>
</comment>
<comment type="subunit">
    <text evidence="1">Homodimer.</text>
</comment>
<comment type="similarity">
    <text evidence="1">Belongs to the RNase Z family.</text>
</comment>
<protein>
    <recommendedName>
        <fullName evidence="1">Ribonuclease Z</fullName>
        <shortName evidence="1">RNase Z</shortName>
        <ecNumber evidence="1">3.1.26.11</ecNumber>
    </recommendedName>
    <alternativeName>
        <fullName evidence="1">tRNA 3 endonuclease</fullName>
    </alternativeName>
    <alternativeName>
        <fullName evidence="1">tRNase Z</fullName>
    </alternativeName>
</protein>
<evidence type="ECO:0000255" key="1">
    <source>
        <dbReference type="HAMAP-Rule" id="MF_01818"/>
    </source>
</evidence>